<name>HISX_BRUAB</name>
<comment type="function">
    <text evidence="1">Catalyzes the sequential NAD-dependent oxidations of L-histidinol to L-histidinaldehyde and then to L-histidine.</text>
</comment>
<comment type="catalytic activity">
    <reaction evidence="1">
        <text>L-histidinol + 2 NAD(+) + H2O = L-histidine + 2 NADH + 3 H(+)</text>
        <dbReference type="Rhea" id="RHEA:20641"/>
        <dbReference type="ChEBI" id="CHEBI:15377"/>
        <dbReference type="ChEBI" id="CHEBI:15378"/>
        <dbReference type="ChEBI" id="CHEBI:57540"/>
        <dbReference type="ChEBI" id="CHEBI:57595"/>
        <dbReference type="ChEBI" id="CHEBI:57699"/>
        <dbReference type="ChEBI" id="CHEBI:57945"/>
        <dbReference type="EC" id="1.1.1.23"/>
    </reaction>
</comment>
<comment type="cofactor">
    <cofactor evidence="1">
        <name>Zn(2+)</name>
        <dbReference type="ChEBI" id="CHEBI:29105"/>
    </cofactor>
    <text evidence="1">Binds 1 zinc ion per subunit.</text>
</comment>
<comment type="pathway">
    <text evidence="1">Amino-acid biosynthesis; L-histidine biosynthesis; L-histidine from 5-phospho-alpha-D-ribose 1-diphosphate: step 9/9.</text>
</comment>
<comment type="similarity">
    <text evidence="1">Belongs to the histidinol dehydrogenase family.</text>
</comment>
<feature type="chain" id="PRO_0000229850" description="Histidinol dehydrogenase">
    <location>
        <begin position="1"/>
        <end position="430"/>
    </location>
</feature>
<feature type="active site" description="Proton acceptor" evidence="1">
    <location>
        <position position="327"/>
    </location>
</feature>
<feature type="active site" description="Proton acceptor" evidence="1">
    <location>
        <position position="328"/>
    </location>
</feature>
<feature type="binding site" evidence="1">
    <location>
        <position position="130"/>
    </location>
    <ligand>
        <name>NAD(+)</name>
        <dbReference type="ChEBI" id="CHEBI:57540"/>
    </ligand>
</feature>
<feature type="binding site" evidence="1">
    <location>
        <position position="191"/>
    </location>
    <ligand>
        <name>NAD(+)</name>
        <dbReference type="ChEBI" id="CHEBI:57540"/>
    </ligand>
</feature>
<feature type="binding site" evidence="1">
    <location>
        <position position="214"/>
    </location>
    <ligand>
        <name>NAD(+)</name>
        <dbReference type="ChEBI" id="CHEBI:57540"/>
    </ligand>
</feature>
<feature type="binding site" evidence="1">
    <location>
        <position position="237"/>
    </location>
    <ligand>
        <name>substrate</name>
    </ligand>
</feature>
<feature type="binding site" evidence="1">
    <location>
        <position position="259"/>
    </location>
    <ligand>
        <name>substrate</name>
    </ligand>
</feature>
<feature type="binding site" evidence="1">
    <location>
        <position position="259"/>
    </location>
    <ligand>
        <name>Zn(2+)</name>
        <dbReference type="ChEBI" id="CHEBI:29105"/>
    </ligand>
</feature>
<feature type="binding site" evidence="1">
    <location>
        <position position="262"/>
    </location>
    <ligand>
        <name>substrate</name>
    </ligand>
</feature>
<feature type="binding site" evidence="1">
    <location>
        <position position="262"/>
    </location>
    <ligand>
        <name>Zn(2+)</name>
        <dbReference type="ChEBI" id="CHEBI:29105"/>
    </ligand>
</feature>
<feature type="binding site" evidence="1">
    <location>
        <position position="328"/>
    </location>
    <ligand>
        <name>substrate</name>
    </ligand>
</feature>
<feature type="binding site" evidence="1">
    <location>
        <position position="361"/>
    </location>
    <ligand>
        <name>substrate</name>
    </ligand>
</feature>
<feature type="binding site" evidence="1">
    <location>
        <position position="361"/>
    </location>
    <ligand>
        <name>Zn(2+)</name>
        <dbReference type="ChEBI" id="CHEBI:29105"/>
    </ligand>
</feature>
<feature type="binding site" evidence="1">
    <location>
        <position position="415"/>
    </location>
    <ligand>
        <name>substrate</name>
    </ligand>
</feature>
<feature type="binding site" evidence="1">
    <location>
        <position position="420"/>
    </location>
    <ligand>
        <name>substrate</name>
    </ligand>
</feature>
<feature type="binding site" evidence="1">
    <location>
        <position position="420"/>
    </location>
    <ligand>
        <name>Zn(2+)</name>
        <dbReference type="ChEBI" id="CHEBI:29105"/>
    </ligand>
</feature>
<reference key="1">
    <citation type="journal article" date="2005" name="J. Bacteriol.">
        <title>Completion of the genome sequence of Brucella abortus and comparison to the highly similar genomes of Brucella melitensis and Brucella suis.</title>
        <authorList>
            <person name="Halling S.M."/>
            <person name="Peterson-Burch B.D."/>
            <person name="Bricker B.J."/>
            <person name="Zuerner R.L."/>
            <person name="Qing Z."/>
            <person name="Li L.-L."/>
            <person name="Kapur V."/>
            <person name="Alt D.P."/>
            <person name="Olsen S.C."/>
        </authorList>
    </citation>
    <scope>NUCLEOTIDE SEQUENCE [LARGE SCALE GENOMIC DNA]</scope>
    <source>
        <strain>9-941</strain>
    </source>
</reference>
<dbReference type="EC" id="1.1.1.23" evidence="1"/>
<dbReference type="EMBL" id="AE017223">
    <property type="protein sequence ID" value="AAX73685.1"/>
    <property type="molecule type" value="Genomic_DNA"/>
</dbReference>
<dbReference type="RefSeq" id="WP_002965534.1">
    <property type="nucleotide sequence ID" value="NC_006932.1"/>
</dbReference>
<dbReference type="SMR" id="Q57F99"/>
<dbReference type="EnsemblBacteria" id="AAX73685">
    <property type="protein sequence ID" value="AAX73685"/>
    <property type="gene ID" value="BruAb1_0280"/>
</dbReference>
<dbReference type="GeneID" id="93017270"/>
<dbReference type="KEGG" id="bmb:BruAb1_0280"/>
<dbReference type="HOGENOM" id="CLU_006732_3_3_5"/>
<dbReference type="UniPathway" id="UPA00031">
    <property type="reaction ID" value="UER00014"/>
</dbReference>
<dbReference type="PRO" id="PR:Q57F99"/>
<dbReference type="Proteomes" id="UP000000540">
    <property type="component" value="Chromosome I"/>
</dbReference>
<dbReference type="GO" id="GO:0005829">
    <property type="term" value="C:cytosol"/>
    <property type="evidence" value="ECO:0007669"/>
    <property type="project" value="TreeGrafter"/>
</dbReference>
<dbReference type="GO" id="GO:0004399">
    <property type="term" value="F:histidinol dehydrogenase activity"/>
    <property type="evidence" value="ECO:0007669"/>
    <property type="project" value="UniProtKB-UniRule"/>
</dbReference>
<dbReference type="GO" id="GO:0051287">
    <property type="term" value="F:NAD binding"/>
    <property type="evidence" value="ECO:0007669"/>
    <property type="project" value="InterPro"/>
</dbReference>
<dbReference type="GO" id="GO:0008270">
    <property type="term" value="F:zinc ion binding"/>
    <property type="evidence" value="ECO:0007669"/>
    <property type="project" value="UniProtKB-UniRule"/>
</dbReference>
<dbReference type="GO" id="GO:0000105">
    <property type="term" value="P:L-histidine biosynthetic process"/>
    <property type="evidence" value="ECO:0007669"/>
    <property type="project" value="UniProtKB-UniRule"/>
</dbReference>
<dbReference type="CDD" id="cd06572">
    <property type="entry name" value="Histidinol_dh"/>
    <property type="match status" value="1"/>
</dbReference>
<dbReference type="FunFam" id="3.40.50.1980:FF:000001">
    <property type="entry name" value="Histidinol dehydrogenase"/>
    <property type="match status" value="1"/>
</dbReference>
<dbReference type="FunFam" id="3.40.50.1980:FF:000026">
    <property type="entry name" value="Histidinol dehydrogenase"/>
    <property type="match status" value="1"/>
</dbReference>
<dbReference type="FunFam" id="1.20.5.1300:FF:000002">
    <property type="entry name" value="Histidinol dehydrogenase, chloroplastic"/>
    <property type="match status" value="1"/>
</dbReference>
<dbReference type="Gene3D" id="1.20.5.1300">
    <property type="match status" value="1"/>
</dbReference>
<dbReference type="Gene3D" id="3.40.50.1980">
    <property type="entry name" value="Nitrogenase molybdenum iron protein domain"/>
    <property type="match status" value="2"/>
</dbReference>
<dbReference type="HAMAP" id="MF_01024">
    <property type="entry name" value="HisD"/>
    <property type="match status" value="1"/>
</dbReference>
<dbReference type="InterPro" id="IPR016161">
    <property type="entry name" value="Ald_DH/histidinol_DH"/>
</dbReference>
<dbReference type="InterPro" id="IPR001692">
    <property type="entry name" value="Histidinol_DH_CS"/>
</dbReference>
<dbReference type="InterPro" id="IPR022695">
    <property type="entry name" value="Histidinol_DH_monofunct"/>
</dbReference>
<dbReference type="InterPro" id="IPR012131">
    <property type="entry name" value="Hstdl_DH"/>
</dbReference>
<dbReference type="NCBIfam" id="TIGR00069">
    <property type="entry name" value="hisD"/>
    <property type="match status" value="1"/>
</dbReference>
<dbReference type="PANTHER" id="PTHR21256:SF2">
    <property type="entry name" value="HISTIDINE BIOSYNTHESIS TRIFUNCTIONAL PROTEIN"/>
    <property type="match status" value="1"/>
</dbReference>
<dbReference type="PANTHER" id="PTHR21256">
    <property type="entry name" value="HISTIDINOL DEHYDROGENASE HDH"/>
    <property type="match status" value="1"/>
</dbReference>
<dbReference type="Pfam" id="PF00815">
    <property type="entry name" value="Histidinol_dh"/>
    <property type="match status" value="1"/>
</dbReference>
<dbReference type="PIRSF" id="PIRSF000099">
    <property type="entry name" value="Histidinol_dh"/>
    <property type="match status" value="1"/>
</dbReference>
<dbReference type="PRINTS" id="PR00083">
    <property type="entry name" value="HOLDHDRGNASE"/>
</dbReference>
<dbReference type="SUPFAM" id="SSF53720">
    <property type="entry name" value="ALDH-like"/>
    <property type="match status" value="1"/>
</dbReference>
<dbReference type="PROSITE" id="PS00611">
    <property type="entry name" value="HISOL_DEHYDROGENASE"/>
    <property type="match status" value="1"/>
</dbReference>
<organism>
    <name type="scientific">Brucella abortus biovar 1 (strain 9-941)</name>
    <dbReference type="NCBI Taxonomy" id="262698"/>
    <lineage>
        <taxon>Bacteria</taxon>
        <taxon>Pseudomonadati</taxon>
        <taxon>Pseudomonadota</taxon>
        <taxon>Alphaproteobacteria</taxon>
        <taxon>Hyphomicrobiales</taxon>
        <taxon>Brucellaceae</taxon>
        <taxon>Brucella/Ochrobactrum group</taxon>
        <taxon>Brucella</taxon>
    </lineage>
</organism>
<keyword id="KW-0028">Amino-acid biosynthesis</keyword>
<keyword id="KW-0368">Histidine biosynthesis</keyword>
<keyword id="KW-0479">Metal-binding</keyword>
<keyword id="KW-0520">NAD</keyword>
<keyword id="KW-0560">Oxidoreductase</keyword>
<keyword id="KW-0862">Zinc</keyword>
<evidence type="ECO:0000255" key="1">
    <source>
        <dbReference type="HAMAP-Rule" id="MF_01024"/>
    </source>
</evidence>
<protein>
    <recommendedName>
        <fullName evidence="1">Histidinol dehydrogenase</fullName>
        <shortName evidence="1">HDH</shortName>
        <ecNumber evidence="1">1.1.1.23</ecNumber>
    </recommendedName>
</protein>
<gene>
    <name evidence="1" type="primary">hisD</name>
    <name type="ordered locus">BruAb1_0280</name>
</gene>
<proteinExistence type="inferred from homology"/>
<accession>Q57F99</accession>
<sequence length="430" mass="46102">MVTTLRQTDPDFEQKFAAFLSGKREVSEDVDRAVREIVDRVRREGDSALLDYSRRFDRIDLEKTGIAVTEAEIDAAFDAAPASTVEALKLARDRIEKHHARQLPKDDRYTDALGVELGSRWTAIEAVGLYVPGGTASYPSSVLMNAMPAKVAGVDRIVMVVPAPDGNLNPLVLVAARLAGVSEIYRVGGAQAIAALAYGTETIRPVAKIVGPGNAYVAAAKRIVFGTVGIDMIAGPSEVLIVADKDNNPDWIAADLLAQAEHDMAAQSILMTNDEAFAHAVEEAVERQLHTLARTETASASWRDFGAVILVKDFEDAIPLANRIAAEHLEIAVADAEAFVPRIRNAGSIFIGGYTPEVIGDYVGGCNHVLPTARSARFSSGLSVLDYMKRTSLLKLGSEQLRALGPAAIEIARAEGLDAHAQSVAIRLNL</sequence>